<feature type="chain" id="PRO_1000120785" description="Small ribosomal subunit protein bS6">
    <location>
        <begin position="1"/>
        <end position="124"/>
    </location>
</feature>
<feature type="region of interest" description="Disordered" evidence="2">
    <location>
        <begin position="105"/>
        <end position="124"/>
    </location>
</feature>
<feature type="compositionally biased region" description="Basic and acidic residues" evidence="2">
    <location>
        <begin position="105"/>
        <end position="115"/>
    </location>
</feature>
<evidence type="ECO:0000255" key="1">
    <source>
        <dbReference type="HAMAP-Rule" id="MF_00360"/>
    </source>
</evidence>
<evidence type="ECO:0000256" key="2">
    <source>
        <dbReference type="SAM" id="MobiDB-lite"/>
    </source>
</evidence>
<evidence type="ECO:0000305" key="3"/>
<organism>
    <name type="scientific">Polynucleobacter necessarius subsp. necessarius (strain STIR1)</name>
    <dbReference type="NCBI Taxonomy" id="452638"/>
    <lineage>
        <taxon>Bacteria</taxon>
        <taxon>Pseudomonadati</taxon>
        <taxon>Pseudomonadota</taxon>
        <taxon>Betaproteobacteria</taxon>
        <taxon>Burkholderiales</taxon>
        <taxon>Burkholderiaceae</taxon>
        <taxon>Polynucleobacter</taxon>
    </lineage>
</organism>
<dbReference type="EMBL" id="CP001010">
    <property type="protein sequence ID" value="ACB43702.1"/>
    <property type="molecule type" value="Genomic_DNA"/>
</dbReference>
<dbReference type="SMR" id="B1XTM5"/>
<dbReference type="STRING" id="452638.Pnec_0428"/>
<dbReference type="KEGG" id="pne:Pnec_0428"/>
<dbReference type="eggNOG" id="COG0360">
    <property type="taxonomic scope" value="Bacteria"/>
</dbReference>
<dbReference type="HOGENOM" id="CLU_113441_6_1_4"/>
<dbReference type="OrthoDB" id="9812702at2"/>
<dbReference type="GO" id="GO:0022627">
    <property type="term" value="C:cytosolic small ribosomal subunit"/>
    <property type="evidence" value="ECO:0007669"/>
    <property type="project" value="TreeGrafter"/>
</dbReference>
<dbReference type="GO" id="GO:0070181">
    <property type="term" value="F:small ribosomal subunit rRNA binding"/>
    <property type="evidence" value="ECO:0007669"/>
    <property type="project" value="TreeGrafter"/>
</dbReference>
<dbReference type="GO" id="GO:0003735">
    <property type="term" value="F:structural constituent of ribosome"/>
    <property type="evidence" value="ECO:0007669"/>
    <property type="project" value="InterPro"/>
</dbReference>
<dbReference type="GO" id="GO:0006412">
    <property type="term" value="P:translation"/>
    <property type="evidence" value="ECO:0007669"/>
    <property type="project" value="UniProtKB-UniRule"/>
</dbReference>
<dbReference type="CDD" id="cd00473">
    <property type="entry name" value="bS6"/>
    <property type="match status" value="1"/>
</dbReference>
<dbReference type="Gene3D" id="3.30.70.60">
    <property type="match status" value="1"/>
</dbReference>
<dbReference type="HAMAP" id="MF_00360">
    <property type="entry name" value="Ribosomal_bS6"/>
    <property type="match status" value="1"/>
</dbReference>
<dbReference type="InterPro" id="IPR000529">
    <property type="entry name" value="Ribosomal_bS6"/>
</dbReference>
<dbReference type="InterPro" id="IPR035980">
    <property type="entry name" value="Ribosomal_bS6_sf"/>
</dbReference>
<dbReference type="InterPro" id="IPR020814">
    <property type="entry name" value="Ribosomal_S6_plastid/chlpt"/>
</dbReference>
<dbReference type="InterPro" id="IPR014717">
    <property type="entry name" value="Transl_elong_EF1B/ribsomal_bS6"/>
</dbReference>
<dbReference type="NCBIfam" id="TIGR00166">
    <property type="entry name" value="S6"/>
    <property type="match status" value="1"/>
</dbReference>
<dbReference type="PANTHER" id="PTHR21011">
    <property type="entry name" value="MITOCHONDRIAL 28S RIBOSOMAL PROTEIN S6"/>
    <property type="match status" value="1"/>
</dbReference>
<dbReference type="PANTHER" id="PTHR21011:SF1">
    <property type="entry name" value="SMALL RIBOSOMAL SUBUNIT PROTEIN BS6M"/>
    <property type="match status" value="1"/>
</dbReference>
<dbReference type="Pfam" id="PF01250">
    <property type="entry name" value="Ribosomal_S6"/>
    <property type="match status" value="1"/>
</dbReference>
<dbReference type="SUPFAM" id="SSF54995">
    <property type="entry name" value="Ribosomal protein S6"/>
    <property type="match status" value="1"/>
</dbReference>
<reference key="1">
    <citation type="journal article" date="2013" name="Proc. Natl. Acad. Sci. U.S.A.">
        <title>Polynucleobacter necessarius, a model for genome reduction in both free-living and symbiotic bacteria.</title>
        <authorList>
            <person name="Boscaro V."/>
            <person name="Felletti M."/>
            <person name="Vannini C."/>
            <person name="Ackerman M.S."/>
            <person name="Chain P.S."/>
            <person name="Malfatti S."/>
            <person name="Vergez L.M."/>
            <person name="Shin M."/>
            <person name="Doak T.G."/>
            <person name="Lynch M."/>
            <person name="Petroni G."/>
        </authorList>
    </citation>
    <scope>NUCLEOTIDE SEQUENCE [LARGE SCALE GENOMIC DNA]</scope>
    <source>
        <strain>STIR1</strain>
    </source>
</reference>
<keyword id="KW-0687">Ribonucleoprotein</keyword>
<keyword id="KW-0689">Ribosomal protein</keyword>
<keyword id="KW-0694">RNA-binding</keyword>
<keyword id="KW-0699">rRNA-binding</keyword>
<proteinExistence type="inferred from homology"/>
<sequence>MRHYEIVFIVHPDQSEQVPAMIDRYKATLAAVGGKIHRMEDWGRRQMAYMIDKLAKAHYVCMNIECDQKTLEELEHAFKFNDAVLRHLIIKTKKAETEPSIMMKEVQHEEARKSAQSDAPVAAA</sequence>
<accession>B1XTM5</accession>
<protein>
    <recommendedName>
        <fullName evidence="1">Small ribosomal subunit protein bS6</fullName>
    </recommendedName>
    <alternativeName>
        <fullName evidence="3">30S ribosomal protein S6</fullName>
    </alternativeName>
</protein>
<comment type="function">
    <text evidence="1">Binds together with bS18 to 16S ribosomal RNA.</text>
</comment>
<comment type="similarity">
    <text evidence="1">Belongs to the bacterial ribosomal protein bS6 family.</text>
</comment>
<gene>
    <name evidence="1" type="primary">rpsF</name>
    <name type="ordered locus">Pnec_0428</name>
</gene>
<name>RS6_POLNS</name>